<sequence length="156" mass="18085">MPRRREVEKRKILPDPKFQDRIVAKFVNNLMRKGKKSTGERIIYGAFDQVEAKLKDDPLKVFKKALDNVKPVVEVKSRRVGGATYQVPVEVRQDRRTALAMRWLIEYSRGRGEKTMVEKLAGEIMDAASNRGNAVKKREDTHKMAEANKAFAHYRW</sequence>
<proteinExistence type="inferred from homology"/>
<evidence type="ECO:0000255" key="1">
    <source>
        <dbReference type="HAMAP-Rule" id="MF_00480"/>
    </source>
</evidence>
<evidence type="ECO:0000305" key="2"/>
<dbReference type="EMBL" id="CP001131">
    <property type="protein sequence ID" value="ACG73158.1"/>
    <property type="molecule type" value="Genomic_DNA"/>
</dbReference>
<dbReference type="RefSeq" id="WP_012525971.1">
    <property type="nucleotide sequence ID" value="NC_011145.1"/>
</dbReference>
<dbReference type="SMR" id="B4UB96"/>
<dbReference type="KEGG" id="ank:AnaeK_1930"/>
<dbReference type="HOGENOM" id="CLU_072226_1_1_7"/>
<dbReference type="OrthoDB" id="9807653at2"/>
<dbReference type="Proteomes" id="UP000001871">
    <property type="component" value="Chromosome"/>
</dbReference>
<dbReference type="GO" id="GO:0015935">
    <property type="term" value="C:small ribosomal subunit"/>
    <property type="evidence" value="ECO:0007669"/>
    <property type="project" value="InterPro"/>
</dbReference>
<dbReference type="GO" id="GO:0019843">
    <property type="term" value="F:rRNA binding"/>
    <property type="evidence" value="ECO:0007669"/>
    <property type="project" value="UniProtKB-UniRule"/>
</dbReference>
<dbReference type="GO" id="GO:0003735">
    <property type="term" value="F:structural constituent of ribosome"/>
    <property type="evidence" value="ECO:0007669"/>
    <property type="project" value="InterPro"/>
</dbReference>
<dbReference type="GO" id="GO:0000049">
    <property type="term" value="F:tRNA binding"/>
    <property type="evidence" value="ECO:0007669"/>
    <property type="project" value="UniProtKB-UniRule"/>
</dbReference>
<dbReference type="GO" id="GO:0006412">
    <property type="term" value="P:translation"/>
    <property type="evidence" value="ECO:0007669"/>
    <property type="project" value="UniProtKB-UniRule"/>
</dbReference>
<dbReference type="CDD" id="cd14869">
    <property type="entry name" value="uS7_Bacteria"/>
    <property type="match status" value="1"/>
</dbReference>
<dbReference type="FunFam" id="1.10.455.10:FF:000001">
    <property type="entry name" value="30S ribosomal protein S7"/>
    <property type="match status" value="1"/>
</dbReference>
<dbReference type="Gene3D" id="1.10.455.10">
    <property type="entry name" value="Ribosomal protein S7 domain"/>
    <property type="match status" value="1"/>
</dbReference>
<dbReference type="HAMAP" id="MF_00480_B">
    <property type="entry name" value="Ribosomal_uS7_B"/>
    <property type="match status" value="1"/>
</dbReference>
<dbReference type="InterPro" id="IPR000235">
    <property type="entry name" value="Ribosomal_uS7"/>
</dbReference>
<dbReference type="InterPro" id="IPR005717">
    <property type="entry name" value="Ribosomal_uS7_bac/org-type"/>
</dbReference>
<dbReference type="InterPro" id="IPR020606">
    <property type="entry name" value="Ribosomal_uS7_CS"/>
</dbReference>
<dbReference type="InterPro" id="IPR023798">
    <property type="entry name" value="Ribosomal_uS7_dom"/>
</dbReference>
<dbReference type="InterPro" id="IPR036823">
    <property type="entry name" value="Ribosomal_uS7_dom_sf"/>
</dbReference>
<dbReference type="NCBIfam" id="TIGR01029">
    <property type="entry name" value="rpsG_bact"/>
    <property type="match status" value="1"/>
</dbReference>
<dbReference type="PANTHER" id="PTHR11205">
    <property type="entry name" value="RIBOSOMAL PROTEIN S7"/>
    <property type="match status" value="1"/>
</dbReference>
<dbReference type="Pfam" id="PF00177">
    <property type="entry name" value="Ribosomal_S7"/>
    <property type="match status" value="1"/>
</dbReference>
<dbReference type="PIRSF" id="PIRSF002122">
    <property type="entry name" value="RPS7p_RPS7a_RPS5e_RPS7o"/>
    <property type="match status" value="1"/>
</dbReference>
<dbReference type="SUPFAM" id="SSF47973">
    <property type="entry name" value="Ribosomal protein S7"/>
    <property type="match status" value="1"/>
</dbReference>
<dbReference type="PROSITE" id="PS00052">
    <property type="entry name" value="RIBOSOMAL_S7"/>
    <property type="match status" value="1"/>
</dbReference>
<gene>
    <name evidence="1" type="primary">rpsG</name>
    <name type="ordered locus">AnaeK_1930</name>
</gene>
<comment type="function">
    <text evidence="1">One of the primary rRNA binding proteins, it binds directly to 16S rRNA where it nucleates assembly of the head domain of the 30S subunit. Is located at the subunit interface close to the decoding center, probably blocks exit of the E-site tRNA.</text>
</comment>
<comment type="subunit">
    <text evidence="1">Part of the 30S ribosomal subunit. Contacts proteins S9 and S11.</text>
</comment>
<comment type="similarity">
    <text evidence="1">Belongs to the universal ribosomal protein uS7 family.</text>
</comment>
<reference key="1">
    <citation type="submission" date="2008-08" db="EMBL/GenBank/DDBJ databases">
        <title>Complete sequence of Anaeromyxobacter sp. K.</title>
        <authorList>
            <consortium name="US DOE Joint Genome Institute"/>
            <person name="Lucas S."/>
            <person name="Copeland A."/>
            <person name="Lapidus A."/>
            <person name="Glavina del Rio T."/>
            <person name="Dalin E."/>
            <person name="Tice H."/>
            <person name="Bruce D."/>
            <person name="Goodwin L."/>
            <person name="Pitluck S."/>
            <person name="Saunders E."/>
            <person name="Brettin T."/>
            <person name="Detter J.C."/>
            <person name="Han C."/>
            <person name="Larimer F."/>
            <person name="Land M."/>
            <person name="Hauser L."/>
            <person name="Kyrpides N."/>
            <person name="Ovchinnikiva G."/>
            <person name="Beliaev A."/>
        </authorList>
    </citation>
    <scope>NUCLEOTIDE SEQUENCE [LARGE SCALE GENOMIC DNA]</scope>
    <source>
        <strain>K</strain>
    </source>
</reference>
<accession>B4UB96</accession>
<keyword id="KW-0687">Ribonucleoprotein</keyword>
<keyword id="KW-0689">Ribosomal protein</keyword>
<keyword id="KW-0694">RNA-binding</keyword>
<keyword id="KW-0699">rRNA-binding</keyword>
<keyword id="KW-0820">tRNA-binding</keyword>
<protein>
    <recommendedName>
        <fullName evidence="1">Small ribosomal subunit protein uS7</fullName>
    </recommendedName>
    <alternativeName>
        <fullName evidence="2">30S ribosomal protein S7</fullName>
    </alternativeName>
</protein>
<name>RS7_ANASK</name>
<organism>
    <name type="scientific">Anaeromyxobacter sp. (strain K)</name>
    <dbReference type="NCBI Taxonomy" id="447217"/>
    <lineage>
        <taxon>Bacteria</taxon>
        <taxon>Pseudomonadati</taxon>
        <taxon>Myxococcota</taxon>
        <taxon>Myxococcia</taxon>
        <taxon>Myxococcales</taxon>
        <taxon>Cystobacterineae</taxon>
        <taxon>Anaeromyxobacteraceae</taxon>
        <taxon>Anaeromyxobacter</taxon>
    </lineage>
</organism>
<feature type="chain" id="PRO_1000125889" description="Small ribosomal subunit protein uS7">
    <location>
        <begin position="1"/>
        <end position="156"/>
    </location>
</feature>